<reference key="1">
    <citation type="journal article" date="2004" name="Nat. Biotechnol.">
        <title>Complete sequence and comparative genome analysis of the dairy bacterium Streptococcus thermophilus.</title>
        <authorList>
            <person name="Bolotin A."/>
            <person name="Quinquis B."/>
            <person name="Renault P."/>
            <person name="Sorokin A."/>
            <person name="Ehrlich S.D."/>
            <person name="Kulakauskas S."/>
            <person name="Lapidus A."/>
            <person name="Goltsman E."/>
            <person name="Mazur M."/>
            <person name="Pusch G.D."/>
            <person name="Fonstein M."/>
            <person name="Overbeek R."/>
            <person name="Kyprides N."/>
            <person name="Purnelle B."/>
            <person name="Prozzi D."/>
            <person name="Ngui K."/>
            <person name="Masuy D."/>
            <person name="Hancy F."/>
            <person name="Burteau S."/>
            <person name="Boutry M."/>
            <person name="Delcour J."/>
            <person name="Goffeau A."/>
            <person name="Hols P."/>
        </authorList>
    </citation>
    <scope>NUCLEOTIDE SEQUENCE [LARGE SCALE GENOMIC DNA]</scope>
    <source>
        <strain>ATCC BAA-250 / LMG 18311</strain>
    </source>
</reference>
<comment type="function">
    <text evidence="1">DNA-dependent RNA polymerase catalyzes the transcription of DNA into RNA using the four ribonucleoside triphosphates as substrates.</text>
</comment>
<comment type="catalytic activity">
    <reaction evidence="1">
        <text>RNA(n) + a ribonucleoside 5'-triphosphate = RNA(n+1) + diphosphate</text>
        <dbReference type="Rhea" id="RHEA:21248"/>
        <dbReference type="Rhea" id="RHEA-COMP:14527"/>
        <dbReference type="Rhea" id="RHEA-COMP:17342"/>
        <dbReference type="ChEBI" id="CHEBI:33019"/>
        <dbReference type="ChEBI" id="CHEBI:61557"/>
        <dbReference type="ChEBI" id="CHEBI:140395"/>
        <dbReference type="EC" id="2.7.7.6"/>
    </reaction>
</comment>
<comment type="subunit">
    <text evidence="1">The RNAP catalytic core consists of 2 alpha, 1 beta, 1 beta' and 1 omega subunit. When a sigma factor is associated with the core the holoenzyme is formed, which can initiate transcription.</text>
</comment>
<comment type="similarity">
    <text evidence="1">Belongs to the RNA polymerase beta chain family.</text>
</comment>
<name>RPOB_STRT2</name>
<gene>
    <name evidence="1" type="primary">rpoB</name>
    <name type="ordered locus">stu1868</name>
</gene>
<organism>
    <name type="scientific">Streptococcus thermophilus (strain ATCC BAA-250 / LMG 18311)</name>
    <dbReference type="NCBI Taxonomy" id="264199"/>
    <lineage>
        <taxon>Bacteria</taxon>
        <taxon>Bacillati</taxon>
        <taxon>Bacillota</taxon>
        <taxon>Bacilli</taxon>
        <taxon>Lactobacillales</taxon>
        <taxon>Streptococcaceae</taxon>
        <taxon>Streptococcus</taxon>
    </lineage>
</organism>
<feature type="chain" id="PRO_0000224111" description="DNA-directed RNA polymerase subunit beta">
    <location>
        <begin position="1"/>
        <end position="1193"/>
    </location>
</feature>
<feature type="region of interest" description="Disordered" evidence="2">
    <location>
        <begin position="1173"/>
        <end position="1193"/>
    </location>
</feature>
<feature type="compositionally biased region" description="Basic and acidic residues" evidence="2">
    <location>
        <begin position="1177"/>
        <end position="1193"/>
    </location>
</feature>
<dbReference type="EC" id="2.7.7.6" evidence="1"/>
<dbReference type="EMBL" id="CP000023">
    <property type="protein sequence ID" value="AAV61467.1"/>
    <property type="molecule type" value="Genomic_DNA"/>
</dbReference>
<dbReference type="RefSeq" id="WP_002947331.1">
    <property type="nucleotide sequence ID" value="NC_006448.1"/>
</dbReference>
<dbReference type="SMR" id="Q5M2F5"/>
<dbReference type="STRING" id="264199.stu1868"/>
<dbReference type="KEGG" id="stl:stu1868"/>
<dbReference type="eggNOG" id="COG0085">
    <property type="taxonomic scope" value="Bacteria"/>
</dbReference>
<dbReference type="HOGENOM" id="CLU_000524_4_1_9"/>
<dbReference type="Proteomes" id="UP000001170">
    <property type="component" value="Chromosome"/>
</dbReference>
<dbReference type="GO" id="GO:0000428">
    <property type="term" value="C:DNA-directed RNA polymerase complex"/>
    <property type="evidence" value="ECO:0007669"/>
    <property type="project" value="UniProtKB-KW"/>
</dbReference>
<dbReference type="GO" id="GO:0003677">
    <property type="term" value="F:DNA binding"/>
    <property type="evidence" value="ECO:0007669"/>
    <property type="project" value="UniProtKB-UniRule"/>
</dbReference>
<dbReference type="GO" id="GO:0003899">
    <property type="term" value="F:DNA-directed RNA polymerase activity"/>
    <property type="evidence" value="ECO:0007669"/>
    <property type="project" value="UniProtKB-UniRule"/>
</dbReference>
<dbReference type="GO" id="GO:0032549">
    <property type="term" value="F:ribonucleoside binding"/>
    <property type="evidence" value="ECO:0007669"/>
    <property type="project" value="InterPro"/>
</dbReference>
<dbReference type="GO" id="GO:0006351">
    <property type="term" value="P:DNA-templated transcription"/>
    <property type="evidence" value="ECO:0007669"/>
    <property type="project" value="UniProtKB-UniRule"/>
</dbReference>
<dbReference type="CDD" id="cd00653">
    <property type="entry name" value="RNA_pol_B_RPB2"/>
    <property type="match status" value="1"/>
</dbReference>
<dbReference type="Gene3D" id="2.40.50.100">
    <property type="match status" value="1"/>
</dbReference>
<dbReference type="Gene3D" id="2.40.50.150">
    <property type="match status" value="1"/>
</dbReference>
<dbReference type="Gene3D" id="3.90.1100.10">
    <property type="match status" value="2"/>
</dbReference>
<dbReference type="Gene3D" id="2.30.150.10">
    <property type="entry name" value="DNA-directed RNA polymerase, beta subunit, external 1 domain"/>
    <property type="match status" value="1"/>
</dbReference>
<dbReference type="Gene3D" id="2.40.270.10">
    <property type="entry name" value="DNA-directed RNA polymerase, subunit 2, domain 6"/>
    <property type="match status" value="1"/>
</dbReference>
<dbReference type="Gene3D" id="3.90.1800.10">
    <property type="entry name" value="RNA polymerase alpha subunit dimerisation domain"/>
    <property type="match status" value="1"/>
</dbReference>
<dbReference type="Gene3D" id="3.90.1110.10">
    <property type="entry name" value="RNA polymerase Rpb2, domain 2"/>
    <property type="match status" value="1"/>
</dbReference>
<dbReference type="HAMAP" id="MF_01321">
    <property type="entry name" value="RNApol_bact_RpoB"/>
    <property type="match status" value="1"/>
</dbReference>
<dbReference type="InterPro" id="IPR042107">
    <property type="entry name" value="DNA-dir_RNA_pol_bsu_ext_1_sf"/>
</dbReference>
<dbReference type="InterPro" id="IPR019462">
    <property type="entry name" value="DNA-dir_RNA_pol_bsu_external_1"/>
</dbReference>
<dbReference type="InterPro" id="IPR015712">
    <property type="entry name" value="DNA-dir_RNA_pol_su2"/>
</dbReference>
<dbReference type="InterPro" id="IPR007120">
    <property type="entry name" value="DNA-dir_RNAP_su2_dom"/>
</dbReference>
<dbReference type="InterPro" id="IPR037033">
    <property type="entry name" value="DNA-dir_RNAP_su2_hyb_sf"/>
</dbReference>
<dbReference type="InterPro" id="IPR010243">
    <property type="entry name" value="RNA_pol_bsu_bac"/>
</dbReference>
<dbReference type="InterPro" id="IPR007121">
    <property type="entry name" value="RNA_pol_bsu_CS"/>
</dbReference>
<dbReference type="InterPro" id="IPR007644">
    <property type="entry name" value="RNA_pol_bsu_protrusion"/>
</dbReference>
<dbReference type="InterPro" id="IPR007642">
    <property type="entry name" value="RNA_pol_Rpb2_2"/>
</dbReference>
<dbReference type="InterPro" id="IPR037034">
    <property type="entry name" value="RNA_pol_Rpb2_2_sf"/>
</dbReference>
<dbReference type="InterPro" id="IPR007645">
    <property type="entry name" value="RNA_pol_Rpb2_3"/>
</dbReference>
<dbReference type="InterPro" id="IPR007641">
    <property type="entry name" value="RNA_pol_Rpb2_7"/>
</dbReference>
<dbReference type="InterPro" id="IPR014724">
    <property type="entry name" value="RNA_pol_RPB2_OB-fold"/>
</dbReference>
<dbReference type="NCBIfam" id="NF001616">
    <property type="entry name" value="PRK00405.1"/>
    <property type="match status" value="1"/>
</dbReference>
<dbReference type="NCBIfam" id="TIGR02013">
    <property type="entry name" value="rpoB"/>
    <property type="match status" value="1"/>
</dbReference>
<dbReference type="PANTHER" id="PTHR20856">
    <property type="entry name" value="DNA-DIRECTED RNA POLYMERASE I SUBUNIT 2"/>
    <property type="match status" value="1"/>
</dbReference>
<dbReference type="Pfam" id="PF04563">
    <property type="entry name" value="RNA_pol_Rpb2_1"/>
    <property type="match status" value="1"/>
</dbReference>
<dbReference type="Pfam" id="PF04561">
    <property type="entry name" value="RNA_pol_Rpb2_2"/>
    <property type="match status" value="2"/>
</dbReference>
<dbReference type="Pfam" id="PF04565">
    <property type="entry name" value="RNA_pol_Rpb2_3"/>
    <property type="match status" value="1"/>
</dbReference>
<dbReference type="Pfam" id="PF10385">
    <property type="entry name" value="RNA_pol_Rpb2_45"/>
    <property type="match status" value="1"/>
</dbReference>
<dbReference type="Pfam" id="PF00562">
    <property type="entry name" value="RNA_pol_Rpb2_6"/>
    <property type="match status" value="1"/>
</dbReference>
<dbReference type="Pfam" id="PF04560">
    <property type="entry name" value="RNA_pol_Rpb2_7"/>
    <property type="match status" value="1"/>
</dbReference>
<dbReference type="SUPFAM" id="SSF64484">
    <property type="entry name" value="beta and beta-prime subunits of DNA dependent RNA-polymerase"/>
    <property type="match status" value="1"/>
</dbReference>
<dbReference type="PROSITE" id="PS01166">
    <property type="entry name" value="RNA_POL_BETA"/>
    <property type="match status" value="1"/>
</dbReference>
<protein>
    <recommendedName>
        <fullName evidence="1">DNA-directed RNA polymerase subunit beta</fullName>
        <shortName evidence="1">RNAP subunit beta</shortName>
        <ecNumber evidence="1">2.7.7.6</ecNumber>
    </recommendedName>
    <alternativeName>
        <fullName evidence="1">RNA polymerase subunit beta</fullName>
    </alternativeName>
    <alternativeName>
        <fullName evidence="1">Transcriptase subunit beta</fullName>
    </alternativeName>
</protein>
<evidence type="ECO:0000255" key="1">
    <source>
        <dbReference type="HAMAP-Rule" id="MF_01321"/>
    </source>
</evidence>
<evidence type="ECO:0000256" key="2">
    <source>
        <dbReference type="SAM" id="MobiDB-lite"/>
    </source>
</evidence>
<sequence>MAGHDVQYGKHRTRRSFSRIKEVLGLPNLIEIQTDSFKEFLDTGLKEVFEDVLPISNFTDTMELEFVGYELKEPKYTLEEARIHDASYSAPIFVTFRLINKETGEIKTQEVFFGDFPIMTEMGTFIINGGERIIVSQLVRSPGVYFNDKVDKNGKVGYGSTVIPNRGAWLELETDSKDIAYTRIDRTRKIPFTTLVRALGFSGDDEIVDIFGDSELVRNTIEKDIHKNPADSRTDEALKEIYERLRPGEPKTADSSRSLLVARFFDPRRYDLAAVGRYKLNKKLNIKTRLLGQTIAENLVDPETGEILVEAGTEMTRDVIDSIAEHLDGDLNKFVYTPNDYAVVTEPVVLQKFKVVAPNDPDRVVTIVGNANPDDKVRALTTADILAEMSYFLNLAEGIGKVDDIDHLGNRRVRAVGELLANQFRIGLARMERNVRERMSVQDNEALTPQQIINIRPVTAAVKEFFGSSQLSQFMDQHNPLSELSHKRRLSALGPGGLTRDRAGYEVRDVHYTHYGRMCPIETPEGPNIGLINNLSTYGRLNKYGFIQTPYRKVDRATGKVTNEVVWLTADEEDEYIVAQANSKLNEDGTFAEEIVMGRHQGVNQEYPSHLVDFVDVSPKQVVAVATACIPFLENDDSNRALMGANMQRQAVPLIDPKAPFVGTGMEYQAAHDSGAAVIAKHDGKVVYSDADKVEVRREDGSLDVYTIQKFRRSNSGTAYNQRTLVKVGDIVEKGDFIADGPSMEGGEMALGQNPIVAYMTWEGYNFEDAVIMSERLVKDDVYTSVHLEEFESETRDTKLGPEEITRELPNVSEEALKNLDEMGIIRIGAEVKEGDILVGKVTPKGEKDLSAEERLLHAIFGDKSREVRDTSLRVPHGGDGVVRDVKIFTRANGDELQSGVNMLVRVYIAQKRKIKVGDKMAGRHGNKGVVSRIVPVEDMPYLPDGTPVDIMLNPLGVPSRMNIGQVMELHLGMAARNLGIYIATPVFDGASSEDLWDTVREAGMDSDAKTILYDGRTGEPFDNRVSVGVMYMIKLHHMVDDKLHARSVGPYSLVTQQPLGGKAQFGGQRFGEMEVWALEAYGASNILQEILTYKSDDVNGRLKAYEAITKGKPIPKPGVPESFRVLVKELQSLGLDMRVLDEDDYEVELRDLDEGEDDDVMHVDDLEKARVQQAKEAAELEKAKEEALDKTE</sequence>
<keyword id="KW-0240">DNA-directed RNA polymerase</keyword>
<keyword id="KW-0548">Nucleotidyltransferase</keyword>
<keyword id="KW-1185">Reference proteome</keyword>
<keyword id="KW-0804">Transcription</keyword>
<keyword id="KW-0808">Transferase</keyword>
<proteinExistence type="inferred from homology"/>
<accession>Q5M2F5</accession>